<proteinExistence type="inferred from homology"/>
<keyword id="KW-0028">Amino-acid biosynthesis</keyword>
<keyword id="KW-0963">Cytoplasm</keyword>
<keyword id="KW-0220">Diaminopimelate biosynthesis</keyword>
<keyword id="KW-0456">Lyase</keyword>
<keyword id="KW-0457">Lysine biosynthesis</keyword>
<keyword id="KW-0704">Schiff base</keyword>
<accession>B5E4D5</accession>
<evidence type="ECO:0000255" key="1">
    <source>
        <dbReference type="HAMAP-Rule" id="MF_00418"/>
    </source>
</evidence>
<evidence type="ECO:0000305" key="2"/>
<organism>
    <name type="scientific">Streptococcus pneumoniae serotype 19F (strain G54)</name>
    <dbReference type="NCBI Taxonomy" id="512566"/>
    <lineage>
        <taxon>Bacteria</taxon>
        <taxon>Bacillati</taxon>
        <taxon>Bacillota</taxon>
        <taxon>Bacilli</taxon>
        <taxon>Lactobacillales</taxon>
        <taxon>Streptococcaceae</taxon>
        <taxon>Streptococcus</taxon>
    </lineage>
</organism>
<feature type="chain" id="PRO_1000124068" description="4-hydroxy-tetrahydrodipicolinate synthase">
    <location>
        <begin position="1"/>
        <end position="311"/>
    </location>
</feature>
<feature type="active site" description="Proton donor/acceptor" evidence="1">
    <location>
        <position position="140"/>
    </location>
</feature>
<feature type="active site" description="Schiff-base intermediate with substrate" evidence="1">
    <location>
        <position position="168"/>
    </location>
</feature>
<feature type="binding site" evidence="1">
    <location>
        <position position="51"/>
    </location>
    <ligand>
        <name>pyruvate</name>
        <dbReference type="ChEBI" id="CHEBI:15361"/>
    </ligand>
</feature>
<feature type="binding site" evidence="1">
    <location>
        <position position="209"/>
    </location>
    <ligand>
        <name>pyruvate</name>
        <dbReference type="ChEBI" id="CHEBI:15361"/>
    </ligand>
</feature>
<feature type="site" description="Part of a proton relay during catalysis" evidence="1">
    <location>
        <position position="50"/>
    </location>
</feature>
<feature type="site" description="Part of a proton relay during catalysis" evidence="1">
    <location>
        <position position="114"/>
    </location>
</feature>
<gene>
    <name evidence="1" type="primary">dapA</name>
    <name type="ordered locus">SPG_0941</name>
</gene>
<protein>
    <recommendedName>
        <fullName evidence="1">4-hydroxy-tetrahydrodipicolinate synthase</fullName>
        <shortName evidence="1">HTPA synthase</shortName>
        <ecNumber evidence="1">4.3.3.7</ecNumber>
    </recommendedName>
</protein>
<sequence length="311" mass="33913">MSYQDLKKCKIITAFITPFHEDGSINFDAIPALIEHLLAHHTDGILLAGTTAESPTLTHDEELELFAAVQKVVNGRVPLIAGVGTNDTRDSIEFVKEVAEFGGFAAGLAIVPYYNKPSQEGMYQHFKTIADASDLPIIIYNIPGRVVVELTPETMLRLADHPNIIGVKECTSLANMAYLIEHKPEEFLIYTGEDGDAFHAMNLGADGVISVASHTNGDEMHEMFTAIAESDMKKAAAIQRKFIPKVNALFSYPSPAPVKAILNYMGFEAGPTRLPLVPAPEEDAKRIIKVVVDGDYEATKATVTGVLRPDY</sequence>
<name>DAPA_STRP4</name>
<comment type="function">
    <text evidence="1">Catalyzes the condensation of (S)-aspartate-beta-semialdehyde [(S)-ASA] and pyruvate to 4-hydroxy-tetrahydrodipicolinate (HTPA).</text>
</comment>
<comment type="catalytic activity">
    <reaction evidence="1">
        <text>L-aspartate 4-semialdehyde + pyruvate = (2S,4S)-4-hydroxy-2,3,4,5-tetrahydrodipicolinate + H2O + H(+)</text>
        <dbReference type="Rhea" id="RHEA:34171"/>
        <dbReference type="ChEBI" id="CHEBI:15361"/>
        <dbReference type="ChEBI" id="CHEBI:15377"/>
        <dbReference type="ChEBI" id="CHEBI:15378"/>
        <dbReference type="ChEBI" id="CHEBI:67139"/>
        <dbReference type="ChEBI" id="CHEBI:537519"/>
        <dbReference type="EC" id="4.3.3.7"/>
    </reaction>
</comment>
<comment type="pathway">
    <text evidence="1">Amino-acid biosynthesis; L-lysine biosynthesis via DAP pathway; (S)-tetrahydrodipicolinate from L-aspartate: step 3/4.</text>
</comment>
<comment type="subunit">
    <text evidence="1">Homotetramer; dimer of dimers.</text>
</comment>
<comment type="subcellular location">
    <subcellularLocation>
        <location evidence="1">Cytoplasm</location>
    </subcellularLocation>
</comment>
<comment type="similarity">
    <text evidence="1">Belongs to the DapA family.</text>
</comment>
<comment type="caution">
    <text evidence="2">Was originally thought to be a dihydrodipicolinate synthase (DHDPS), catalyzing the condensation of (S)-aspartate-beta-semialdehyde [(S)-ASA] and pyruvate to dihydrodipicolinate (DHDP). However, it was shown in E.coli that the product of the enzymatic reaction is not dihydrodipicolinate but in fact (4S)-4-hydroxy-2,3,4,5-tetrahydro-(2S)-dipicolinic acid (HTPA), and that the consecutive dehydration reaction leading to DHDP is not spontaneous but catalyzed by DapB.</text>
</comment>
<dbReference type="EC" id="4.3.3.7" evidence="1"/>
<dbReference type="EMBL" id="CP001015">
    <property type="protein sequence ID" value="ACF55846.1"/>
    <property type="molecule type" value="Genomic_DNA"/>
</dbReference>
<dbReference type="SMR" id="B5E4D5"/>
<dbReference type="KEGG" id="spx:SPG_0941"/>
<dbReference type="HOGENOM" id="CLU_049343_7_1_9"/>
<dbReference type="UniPathway" id="UPA00034">
    <property type="reaction ID" value="UER00017"/>
</dbReference>
<dbReference type="GO" id="GO:0005829">
    <property type="term" value="C:cytosol"/>
    <property type="evidence" value="ECO:0007669"/>
    <property type="project" value="TreeGrafter"/>
</dbReference>
<dbReference type="GO" id="GO:0008840">
    <property type="term" value="F:4-hydroxy-tetrahydrodipicolinate synthase activity"/>
    <property type="evidence" value="ECO:0007669"/>
    <property type="project" value="UniProtKB-UniRule"/>
</dbReference>
<dbReference type="GO" id="GO:0019877">
    <property type="term" value="P:diaminopimelate biosynthetic process"/>
    <property type="evidence" value="ECO:0007669"/>
    <property type="project" value="UniProtKB-UniRule"/>
</dbReference>
<dbReference type="GO" id="GO:0009089">
    <property type="term" value="P:lysine biosynthetic process via diaminopimelate"/>
    <property type="evidence" value="ECO:0007669"/>
    <property type="project" value="UniProtKB-UniRule"/>
</dbReference>
<dbReference type="CDD" id="cd00950">
    <property type="entry name" value="DHDPS"/>
    <property type="match status" value="1"/>
</dbReference>
<dbReference type="Gene3D" id="3.20.20.70">
    <property type="entry name" value="Aldolase class I"/>
    <property type="match status" value="1"/>
</dbReference>
<dbReference type="HAMAP" id="MF_00418">
    <property type="entry name" value="DapA"/>
    <property type="match status" value="1"/>
</dbReference>
<dbReference type="InterPro" id="IPR013785">
    <property type="entry name" value="Aldolase_TIM"/>
</dbReference>
<dbReference type="InterPro" id="IPR005263">
    <property type="entry name" value="DapA"/>
</dbReference>
<dbReference type="InterPro" id="IPR002220">
    <property type="entry name" value="DapA-like"/>
</dbReference>
<dbReference type="InterPro" id="IPR020625">
    <property type="entry name" value="Schiff_base-form_aldolases_AS"/>
</dbReference>
<dbReference type="NCBIfam" id="TIGR00674">
    <property type="entry name" value="dapA"/>
    <property type="match status" value="1"/>
</dbReference>
<dbReference type="PANTHER" id="PTHR12128:SF66">
    <property type="entry name" value="4-HYDROXY-2-OXOGLUTARATE ALDOLASE, MITOCHONDRIAL"/>
    <property type="match status" value="1"/>
</dbReference>
<dbReference type="PANTHER" id="PTHR12128">
    <property type="entry name" value="DIHYDRODIPICOLINATE SYNTHASE"/>
    <property type="match status" value="1"/>
</dbReference>
<dbReference type="Pfam" id="PF00701">
    <property type="entry name" value="DHDPS"/>
    <property type="match status" value="1"/>
</dbReference>
<dbReference type="PIRSF" id="PIRSF001365">
    <property type="entry name" value="DHDPS"/>
    <property type="match status" value="1"/>
</dbReference>
<dbReference type="PRINTS" id="PR00146">
    <property type="entry name" value="DHPICSNTHASE"/>
</dbReference>
<dbReference type="SMART" id="SM01130">
    <property type="entry name" value="DHDPS"/>
    <property type="match status" value="1"/>
</dbReference>
<dbReference type="SUPFAM" id="SSF51569">
    <property type="entry name" value="Aldolase"/>
    <property type="match status" value="1"/>
</dbReference>
<dbReference type="PROSITE" id="PS00666">
    <property type="entry name" value="DHDPS_2"/>
    <property type="match status" value="1"/>
</dbReference>
<reference key="1">
    <citation type="journal article" date="2001" name="Microb. Drug Resist.">
        <title>Annotated draft genomic sequence from a Streptococcus pneumoniae type 19F clinical isolate.</title>
        <authorList>
            <person name="Dopazo J."/>
            <person name="Mendoza A."/>
            <person name="Herrero J."/>
            <person name="Caldara F."/>
            <person name="Humbert Y."/>
            <person name="Friedli L."/>
            <person name="Guerrier M."/>
            <person name="Grand-Schenk E."/>
            <person name="Gandin C."/>
            <person name="de Francesco M."/>
            <person name="Polissi A."/>
            <person name="Buell G."/>
            <person name="Feger G."/>
            <person name="Garcia E."/>
            <person name="Peitsch M."/>
            <person name="Garcia-Bustos J.F."/>
        </authorList>
    </citation>
    <scope>NUCLEOTIDE SEQUENCE [LARGE SCALE GENOMIC DNA]</scope>
    <source>
        <strain>G54</strain>
    </source>
</reference>
<reference key="2">
    <citation type="submission" date="2008-03" db="EMBL/GenBank/DDBJ databases">
        <title>Pneumococcal beta glucoside metabolism investigated by whole genome comparison.</title>
        <authorList>
            <person name="Mulas L."/>
            <person name="Trappetti C."/>
            <person name="Hakenbeck R."/>
            <person name="Iannelli F."/>
            <person name="Pozzi G."/>
            <person name="Davidsen T.M."/>
            <person name="Tettelin H."/>
            <person name="Oggioni M."/>
        </authorList>
    </citation>
    <scope>NUCLEOTIDE SEQUENCE [LARGE SCALE GENOMIC DNA]</scope>
    <source>
        <strain>G54</strain>
    </source>
</reference>